<reference key="1">
    <citation type="submission" date="2005-10" db="EMBL/GenBank/DDBJ databases">
        <title>Complete sequence of Pelobacter carbinolicus DSM 2380.</title>
        <authorList>
            <person name="Copeland A."/>
            <person name="Lucas S."/>
            <person name="Lapidus A."/>
            <person name="Barry K."/>
            <person name="Detter J.C."/>
            <person name="Glavina T."/>
            <person name="Hammon N."/>
            <person name="Israni S."/>
            <person name="Pitluck S."/>
            <person name="Chertkov O."/>
            <person name="Schmutz J."/>
            <person name="Larimer F."/>
            <person name="Land M."/>
            <person name="Kyrpides N."/>
            <person name="Ivanova N."/>
            <person name="Richardson P."/>
        </authorList>
    </citation>
    <scope>NUCLEOTIDE SEQUENCE [LARGE SCALE GENOMIC DNA]</scope>
    <source>
        <strain>DSM 2380 / NBRC 103641 / GraBd1</strain>
    </source>
</reference>
<protein>
    <recommendedName>
        <fullName evidence="1">Protease HtpX homolog</fullName>
        <ecNumber evidence="1">3.4.24.-</ecNumber>
    </recommendedName>
</protein>
<comment type="cofactor">
    <cofactor evidence="1">
        <name>Zn(2+)</name>
        <dbReference type="ChEBI" id="CHEBI:29105"/>
    </cofactor>
    <text evidence="1">Binds 1 zinc ion per subunit.</text>
</comment>
<comment type="subcellular location">
    <subcellularLocation>
        <location evidence="1">Cell inner membrane</location>
        <topology evidence="1">Multi-pass membrane protein</topology>
    </subcellularLocation>
</comment>
<comment type="similarity">
    <text evidence="1">Belongs to the peptidase M48B family.</text>
</comment>
<dbReference type="EC" id="3.4.24.-" evidence="1"/>
<dbReference type="EMBL" id="CP000142">
    <property type="protein sequence ID" value="ABA87503.1"/>
    <property type="molecule type" value="Genomic_DNA"/>
</dbReference>
<dbReference type="RefSeq" id="WP_011339908.1">
    <property type="nucleotide sequence ID" value="NC_007498.2"/>
</dbReference>
<dbReference type="SMR" id="Q3A7Y9"/>
<dbReference type="STRING" id="338963.Pcar_0242"/>
<dbReference type="KEGG" id="pca:Pcar_0242"/>
<dbReference type="eggNOG" id="COG0501">
    <property type="taxonomic scope" value="Bacteria"/>
</dbReference>
<dbReference type="HOGENOM" id="CLU_042266_3_0_7"/>
<dbReference type="OrthoDB" id="15218at2"/>
<dbReference type="Proteomes" id="UP000002534">
    <property type="component" value="Chromosome"/>
</dbReference>
<dbReference type="GO" id="GO:0005886">
    <property type="term" value="C:plasma membrane"/>
    <property type="evidence" value="ECO:0007669"/>
    <property type="project" value="UniProtKB-SubCell"/>
</dbReference>
<dbReference type="GO" id="GO:0004222">
    <property type="term" value="F:metalloendopeptidase activity"/>
    <property type="evidence" value="ECO:0007669"/>
    <property type="project" value="UniProtKB-UniRule"/>
</dbReference>
<dbReference type="GO" id="GO:0008270">
    <property type="term" value="F:zinc ion binding"/>
    <property type="evidence" value="ECO:0007669"/>
    <property type="project" value="UniProtKB-UniRule"/>
</dbReference>
<dbReference type="GO" id="GO:0006508">
    <property type="term" value="P:proteolysis"/>
    <property type="evidence" value="ECO:0007669"/>
    <property type="project" value="UniProtKB-KW"/>
</dbReference>
<dbReference type="CDD" id="cd07336">
    <property type="entry name" value="M48B_HtpX_like"/>
    <property type="match status" value="1"/>
</dbReference>
<dbReference type="Gene3D" id="3.30.2010.10">
    <property type="entry name" value="Metalloproteases ('zincins'), catalytic domain"/>
    <property type="match status" value="1"/>
</dbReference>
<dbReference type="HAMAP" id="MF_00188">
    <property type="entry name" value="Pept_M48_protease_HtpX"/>
    <property type="match status" value="1"/>
</dbReference>
<dbReference type="InterPro" id="IPR050083">
    <property type="entry name" value="HtpX_protease"/>
</dbReference>
<dbReference type="InterPro" id="IPR022919">
    <property type="entry name" value="Pept_M48_protease_HtpX"/>
</dbReference>
<dbReference type="InterPro" id="IPR001915">
    <property type="entry name" value="Peptidase_M48"/>
</dbReference>
<dbReference type="NCBIfam" id="NF002826">
    <property type="entry name" value="PRK03001.1"/>
    <property type="match status" value="1"/>
</dbReference>
<dbReference type="PANTHER" id="PTHR43221">
    <property type="entry name" value="PROTEASE HTPX"/>
    <property type="match status" value="1"/>
</dbReference>
<dbReference type="PANTHER" id="PTHR43221:SF1">
    <property type="entry name" value="PROTEASE HTPX"/>
    <property type="match status" value="1"/>
</dbReference>
<dbReference type="Pfam" id="PF01435">
    <property type="entry name" value="Peptidase_M48"/>
    <property type="match status" value="1"/>
</dbReference>
<gene>
    <name evidence="1" type="primary">htpX</name>
    <name type="ordered locus">Pcar_0242</name>
</gene>
<name>HTPX_SYNC1</name>
<evidence type="ECO:0000255" key="1">
    <source>
        <dbReference type="HAMAP-Rule" id="MF_00188"/>
    </source>
</evidence>
<feature type="chain" id="PRO_1000020906" description="Protease HtpX homolog">
    <location>
        <begin position="1"/>
        <end position="279"/>
    </location>
</feature>
<feature type="transmembrane region" description="Helical" evidence="1">
    <location>
        <begin position="6"/>
        <end position="26"/>
    </location>
</feature>
<feature type="transmembrane region" description="Helical" evidence="1">
    <location>
        <begin position="28"/>
        <end position="48"/>
    </location>
</feature>
<feature type="transmembrane region" description="Helical" evidence="1">
    <location>
        <begin position="137"/>
        <end position="157"/>
    </location>
</feature>
<feature type="transmembrane region" description="Helical" evidence="1">
    <location>
        <begin position="177"/>
        <end position="197"/>
    </location>
</feature>
<feature type="active site" evidence="1">
    <location>
        <position position="128"/>
    </location>
</feature>
<feature type="binding site" evidence="1">
    <location>
        <position position="127"/>
    </location>
    <ligand>
        <name>Zn(2+)</name>
        <dbReference type="ChEBI" id="CHEBI:29105"/>
        <note>catalytic</note>
    </ligand>
</feature>
<feature type="binding site" evidence="1">
    <location>
        <position position="131"/>
    </location>
    <ligand>
        <name>Zn(2+)</name>
        <dbReference type="ChEBI" id="CHEBI:29105"/>
        <note>catalytic</note>
    </ligand>
</feature>
<feature type="binding site" evidence="1">
    <location>
        <position position="202"/>
    </location>
    <ligand>
        <name>Zn(2+)</name>
        <dbReference type="ChEBI" id="CHEBI:29105"/>
        <note>catalytic</note>
    </ligand>
</feature>
<sequence>MNTLRTVALMTVLTLLLVWAGGMMGGRGGALFALIMAAVMNLGSYWFSDKIVIAMYRGREVSSGPLFSVVQELCLRNALPMPKVYILPQATPNAFATGRNPKHAAVAATEGILQVLSREELMGVMAHEMSHVRHRDILIGSIAATIAGAISYLAHMAQWAALFGGFGGRDDDDGNPLGLLLLIIFAPLAAMLVQMAISRSREYAADRGGAALCGNPHYLANALRKLEMANSRQPMPKVNEATAHMFIVNPLRGGGLKSLFSTHPPVDERIRRLENMTVL</sequence>
<proteinExistence type="inferred from homology"/>
<organism>
    <name type="scientific">Syntrophotalea carbinolica (strain DSM 2380 / NBRC 103641 / GraBd1)</name>
    <name type="common">Pelobacter carbinolicus</name>
    <dbReference type="NCBI Taxonomy" id="338963"/>
    <lineage>
        <taxon>Bacteria</taxon>
        <taxon>Pseudomonadati</taxon>
        <taxon>Thermodesulfobacteriota</taxon>
        <taxon>Desulfuromonadia</taxon>
        <taxon>Desulfuromonadales</taxon>
        <taxon>Syntrophotaleaceae</taxon>
        <taxon>Syntrophotalea</taxon>
    </lineage>
</organism>
<keyword id="KW-0997">Cell inner membrane</keyword>
<keyword id="KW-1003">Cell membrane</keyword>
<keyword id="KW-0378">Hydrolase</keyword>
<keyword id="KW-0472">Membrane</keyword>
<keyword id="KW-0479">Metal-binding</keyword>
<keyword id="KW-0482">Metalloprotease</keyword>
<keyword id="KW-0645">Protease</keyword>
<keyword id="KW-1185">Reference proteome</keyword>
<keyword id="KW-0812">Transmembrane</keyword>
<keyword id="KW-1133">Transmembrane helix</keyword>
<keyword id="KW-0862">Zinc</keyword>
<accession>Q3A7Y9</accession>